<geneLocation type="plasmid">
    <name>pRSPA01</name>
</geneLocation>
<accession>A4WZ45</accession>
<gene>
    <name evidence="1" type="primary">obg</name>
    <name type="ordered locus">Rsph17025_3802</name>
</gene>
<reference key="1">
    <citation type="submission" date="2007-04" db="EMBL/GenBank/DDBJ databases">
        <title>Complete sequence of plasmid pRSPA01 of Rhodobacter sphaeroides ATCC 17025.</title>
        <authorList>
            <consortium name="US DOE Joint Genome Institute"/>
            <person name="Copeland A."/>
            <person name="Lucas S."/>
            <person name="Lapidus A."/>
            <person name="Barry K."/>
            <person name="Detter J.C."/>
            <person name="Glavina del Rio T."/>
            <person name="Hammon N."/>
            <person name="Israni S."/>
            <person name="Dalin E."/>
            <person name="Tice H."/>
            <person name="Pitluck S."/>
            <person name="Chertkov O."/>
            <person name="Brettin T."/>
            <person name="Bruce D."/>
            <person name="Han C."/>
            <person name="Schmutz J."/>
            <person name="Larimer F."/>
            <person name="Land M."/>
            <person name="Hauser L."/>
            <person name="Kyrpides N."/>
            <person name="Kim E."/>
            <person name="Richardson P."/>
            <person name="Mackenzie C."/>
            <person name="Choudhary M."/>
            <person name="Donohue T.J."/>
            <person name="Kaplan S."/>
        </authorList>
    </citation>
    <scope>NUCLEOTIDE SEQUENCE [LARGE SCALE GENOMIC DNA]</scope>
    <source>
        <strain>ATCC 17025 / ATH 2.4.3</strain>
    </source>
</reference>
<name>OBG_CERS5</name>
<sequence>MKFLDLCKVYIRSGGGGGGCVSFRREKFIEFGGPDGGDGGNGGSVWAEAVEGLNTLIDFRYQQHFFAKSGQPGMGSQRTGKSGEDIVLKVPVGTEIIDEDEETVIADLTEVGQRILLAQGGNGGWGNLRFKSSTNRAPARANPGQPGIDRTIWLRLKLIADAGLLGLPNAGKSTFLSATSNARPKIADYPFTTLVPNLGVVGVDGKEFVIADIPGLIEGASEGRGLGDQFLAHVERCSVLLHLVDGTSSTIVKDYRTIIGELEAYGGDLAGKPRITAMNKIDAMDPRQISDRRRALEKATGGKVFTISGVAGTGLMEVLRALWAEIDGARGDAVEEHVPWQP</sequence>
<evidence type="ECO:0000255" key="1">
    <source>
        <dbReference type="HAMAP-Rule" id="MF_01454"/>
    </source>
</evidence>
<evidence type="ECO:0000255" key="2">
    <source>
        <dbReference type="PROSITE-ProRule" id="PRU01231"/>
    </source>
</evidence>
<evidence type="ECO:0000305" key="3"/>
<keyword id="KW-0963">Cytoplasm</keyword>
<keyword id="KW-0342">GTP-binding</keyword>
<keyword id="KW-0378">Hydrolase</keyword>
<keyword id="KW-0460">Magnesium</keyword>
<keyword id="KW-0479">Metal-binding</keyword>
<keyword id="KW-0547">Nucleotide-binding</keyword>
<keyword id="KW-0614">Plasmid</keyword>
<proteinExistence type="inferred from homology"/>
<dbReference type="EC" id="3.6.5.-" evidence="1"/>
<dbReference type="EMBL" id="CP000662">
    <property type="protein sequence ID" value="ABP72659.1"/>
    <property type="status" value="ALT_INIT"/>
    <property type="molecule type" value="Genomic_DNA"/>
</dbReference>
<dbReference type="SMR" id="A4WZ45"/>
<dbReference type="KEGG" id="rsq:Rsph17025_3802"/>
<dbReference type="HOGENOM" id="CLU_011747_2_0_5"/>
<dbReference type="BioCyc" id="RSPH349102:G1G8M-3916-MONOMER"/>
<dbReference type="GO" id="GO:0005737">
    <property type="term" value="C:cytoplasm"/>
    <property type="evidence" value="ECO:0007669"/>
    <property type="project" value="UniProtKB-SubCell"/>
</dbReference>
<dbReference type="GO" id="GO:0005525">
    <property type="term" value="F:GTP binding"/>
    <property type="evidence" value="ECO:0007669"/>
    <property type="project" value="UniProtKB-UniRule"/>
</dbReference>
<dbReference type="GO" id="GO:0003924">
    <property type="term" value="F:GTPase activity"/>
    <property type="evidence" value="ECO:0007669"/>
    <property type="project" value="UniProtKB-UniRule"/>
</dbReference>
<dbReference type="GO" id="GO:0000287">
    <property type="term" value="F:magnesium ion binding"/>
    <property type="evidence" value="ECO:0007669"/>
    <property type="project" value="InterPro"/>
</dbReference>
<dbReference type="GO" id="GO:0042254">
    <property type="term" value="P:ribosome biogenesis"/>
    <property type="evidence" value="ECO:0007669"/>
    <property type="project" value="UniProtKB-UniRule"/>
</dbReference>
<dbReference type="CDD" id="cd01898">
    <property type="entry name" value="Obg"/>
    <property type="match status" value="1"/>
</dbReference>
<dbReference type="FunFam" id="2.70.210.12:FF:000001">
    <property type="entry name" value="GTPase Obg"/>
    <property type="match status" value="1"/>
</dbReference>
<dbReference type="Gene3D" id="2.70.210.12">
    <property type="entry name" value="GTP1/OBG domain"/>
    <property type="match status" value="1"/>
</dbReference>
<dbReference type="Gene3D" id="3.40.50.300">
    <property type="entry name" value="P-loop containing nucleotide triphosphate hydrolases"/>
    <property type="match status" value="1"/>
</dbReference>
<dbReference type="HAMAP" id="MF_01454">
    <property type="entry name" value="GTPase_Obg"/>
    <property type="match status" value="1"/>
</dbReference>
<dbReference type="InterPro" id="IPR031167">
    <property type="entry name" value="G_OBG"/>
</dbReference>
<dbReference type="InterPro" id="IPR006073">
    <property type="entry name" value="GTP-bd"/>
</dbReference>
<dbReference type="InterPro" id="IPR014100">
    <property type="entry name" value="GTP-bd_Obg/CgtA"/>
</dbReference>
<dbReference type="InterPro" id="IPR006074">
    <property type="entry name" value="GTP1-OBG_CS"/>
</dbReference>
<dbReference type="InterPro" id="IPR006169">
    <property type="entry name" value="GTP1_OBG_dom"/>
</dbReference>
<dbReference type="InterPro" id="IPR036726">
    <property type="entry name" value="GTP1_OBG_dom_sf"/>
</dbReference>
<dbReference type="InterPro" id="IPR045086">
    <property type="entry name" value="OBG_GTPase"/>
</dbReference>
<dbReference type="InterPro" id="IPR027417">
    <property type="entry name" value="P-loop_NTPase"/>
</dbReference>
<dbReference type="NCBIfam" id="TIGR02729">
    <property type="entry name" value="Obg_CgtA"/>
    <property type="match status" value="1"/>
</dbReference>
<dbReference type="NCBIfam" id="NF008955">
    <property type="entry name" value="PRK12297.1"/>
    <property type="match status" value="1"/>
</dbReference>
<dbReference type="NCBIfam" id="NF008956">
    <property type="entry name" value="PRK12299.1"/>
    <property type="match status" value="1"/>
</dbReference>
<dbReference type="PANTHER" id="PTHR11702">
    <property type="entry name" value="DEVELOPMENTALLY REGULATED GTP-BINDING PROTEIN-RELATED"/>
    <property type="match status" value="1"/>
</dbReference>
<dbReference type="PANTHER" id="PTHR11702:SF31">
    <property type="entry name" value="MITOCHONDRIAL RIBOSOME-ASSOCIATED GTPASE 2"/>
    <property type="match status" value="1"/>
</dbReference>
<dbReference type="Pfam" id="PF01018">
    <property type="entry name" value="GTP1_OBG"/>
    <property type="match status" value="1"/>
</dbReference>
<dbReference type="Pfam" id="PF01926">
    <property type="entry name" value="MMR_HSR1"/>
    <property type="match status" value="1"/>
</dbReference>
<dbReference type="PIRSF" id="PIRSF002401">
    <property type="entry name" value="GTP_bd_Obg/CgtA"/>
    <property type="match status" value="1"/>
</dbReference>
<dbReference type="PRINTS" id="PR00326">
    <property type="entry name" value="GTP1OBG"/>
</dbReference>
<dbReference type="SUPFAM" id="SSF82051">
    <property type="entry name" value="Obg GTP-binding protein N-terminal domain"/>
    <property type="match status" value="1"/>
</dbReference>
<dbReference type="SUPFAM" id="SSF52540">
    <property type="entry name" value="P-loop containing nucleoside triphosphate hydrolases"/>
    <property type="match status" value="1"/>
</dbReference>
<dbReference type="PROSITE" id="PS51710">
    <property type="entry name" value="G_OBG"/>
    <property type="match status" value="1"/>
</dbReference>
<dbReference type="PROSITE" id="PS00905">
    <property type="entry name" value="GTP1_OBG"/>
    <property type="match status" value="1"/>
</dbReference>
<dbReference type="PROSITE" id="PS51883">
    <property type="entry name" value="OBG"/>
    <property type="match status" value="1"/>
</dbReference>
<organism>
    <name type="scientific">Cereibacter sphaeroides (strain ATCC 17025 / ATH 2.4.3)</name>
    <name type="common">Rhodobacter sphaeroides</name>
    <dbReference type="NCBI Taxonomy" id="349102"/>
    <lineage>
        <taxon>Bacteria</taxon>
        <taxon>Pseudomonadati</taxon>
        <taxon>Pseudomonadota</taxon>
        <taxon>Alphaproteobacteria</taxon>
        <taxon>Rhodobacterales</taxon>
        <taxon>Paracoccaceae</taxon>
        <taxon>Cereibacter</taxon>
    </lineage>
</organism>
<comment type="function">
    <text evidence="1">An essential GTPase which binds GTP, GDP and possibly (p)ppGpp with moderate affinity, with high nucleotide exchange rates and a fairly low GTP hydrolysis rate. Plays a role in control of the cell cycle, stress response, ribosome biogenesis and in those bacteria that undergo differentiation, in morphogenesis control.</text>
</comment>
<comment type="cofactor">
    <cofactor evidence="1">
        <name>Mg(2+)</name>
        <dbReference type="ChEBI" id="CHEBI:18420"/>
    </cofactor>
</comment>
<comment type="subunit">
    <text evidence="1">Monomer.</text>
</comment>
<comment type="subcellular location">
    <subcellularLocation>
        <location evidence="1">Cytoplasm</location>
    </subcellularLocation>
</comment>
<comment type="similarity">
    <text evidence="1">Belongs to the TRAFAC class OBG-HflX-like GTPase superfamily. OBG GTPase family.</text>
</comment>
<comment type="sequence caution" evidence="3">
    <conflict type="erroneous initiation">
        <sequence resource="EMBL-CDS" id="ABP72659"/>
    </conflict>
    <text>Extended N-terminus.</text>
</comment>
<protein>
    <recommendedName>
        <fullName evidence="1">GTPase Obg</fullName>
        <ecNumber evidence="1">3.6.5.-</ecNumber>
    </recommendedName>
    <alternativeName>
        <fullName evidence="1">GTP-binding protein Obg</fullName>
    </alternativeName>
</protein>
<feature type="chain" id="PRO_0000386183" description="GTPase Obg">
    <location>
        <begin position="1"/>
        <end position="342"/>
    </location>
</feature>
<feature type="domain" description="Obg" evidence="2">
    <location>
        <begin position="1"/>
        <end position="159"/>
    </location>
</feature>
<feature type="domain" description="OBG-type G" evidence="1">
    <location>
        <begin position="160"/>
        <end position="327"/>
    </location>
</feature>
<feature type="binding site" evidence="1">
    <location>
        <begin position="166"/>
        <end position="173"/>
    </location>
    <ligand>
        <name>GTP</name>
        <dbReference type="ChEBI" id="CHEBI:37565"/>
    </ligand>
</feature>
<feature type="binding site" evidence="1">
    <location>
        <position position="173"/>
    </location>
    <ligand>
        <name>Mg(2+)</name>
        <dbReference type="ChEBI" id="CHEBI:18420"/>
    </ligand>
</feature>
<feature type="binding site" evidence="1">
    <location>
        <begin position="191"/>
        <end position="195"/>
    </location>
    <ligand>
        <name>GTP</name>
        <dbReference type="ChEBI" id="CHEBI:37565"/>
    </ligand>
</feature>
<feature type="binding site" evidence="1">
    <location>
        <position position="193"/>
    </location>
    <ligand>
        <name>Mg(2+)</name>
        <dbReference type="ChEBI" id="CHEBI:18420"/>
    </ligand>
</feature>
<feature type="binding site" evidence="1">
    <location>
        <begin position="212"/>
        <end position="215"/>
    </location>
    <ligand>
        <name>GTP</name>
        <dbReference type="ChEBI" id="CHEBI:37565"/>
    </ligand>
</feature>
<feature type="binding site" evidence="1">
    <location>
        <begin position="279"/>
        <end position="282"/>
    </location>
    <ligand>
        <name>GTP</name>
        <dbReference type="ChEBI" id="CHEBI:37565"/>
    </ligand>
</feature>
<feature type="binding site" evidence="1">
    <location>
        <begin position="308"/>
        <end position="310"/>
    </location>
    <ligand>
        <name>GTP</name>
        <dbReference type="ChEBI" id="CHEBI:37565"/>
    </ligand>
</feature>